<proteinExistence type="inferred from homology"/>
<comment type="function">
    <text evidence="1">Bidirectionally degrades single-stranded DNA into large acid-insoluble oligonucleotides, which are then degraded further into small acid-soluble oligonucleotides.</text>
</comment>
<comment type="catalytic activity">
    <reaction evidence="1">
        <text>Exonucleolytic cleavage in either 5'- to 3'- or 3'- to 5'-direction to yield nucleoside 5'-phosphates.</text>
        <dbReference type="EC" id="3.1.11.6"/>
    </reaction>
</comment>
<comment type="subunit">
    <text evidence="1">Heterooligomer composed of large and small subunits.</text>
</comment>
<comment type="subcellular location">
    <subcellularLocation>
        <location evidence="1">Cytoplasm</location>
    </subcellularLocation>
</comment>
<comment type="similarity">
    <text evidence="1">Belongs to the XseA family.</text>
</comment>
<name>EX7L_PSEA8</name>
<protein>
    <recommendedName>
        <fullName evidence="1">Exodeoxyribonuclease 7 large subunit</fullName>
        <ecNumber evidence="1">3.1.11.6</ecNumber>
    </recommendedName>
    <alternativeName>
        <fullName evidence="1">Exodeoxyribonuclease VII large subunit</fullName>
        <shortName evidence="1">Exonuclease VII large subunit</shortName>
    </alternativeName>
</protein>
<dbReference type="EC" id="3.1.11.6" evidence="1"/>
<dbReference type="EMBL" id="FM209186">
    <property type="protein sequence ID" value="CAW25924.1"/>
    <property type="molecule type" value="Genomic_DNA"/>
</dbReference>
<dbReference type="RefSeq" id="WP_012613654.1">
    <property type="nucleotide sequence ID" value="NC_011770.1"/>
</dbReference>
<dbReference type="SMR" id="B7UXJ1"/>
<dbReference type="KEGG" id="pag:PLES_11971"/>
<dbReference type="HOGENOM" id="CLU_023625_3_1_6"/>
<dbReference type="GO" id="GO:0005737">
    <property type="term" value="C:cytoplasm"/>
    <property type="evidence" value="ECO:0007669"/>
    <property type="project" value="UniProtKB-SubCell"/>
</dbReference>
<dbReference type="GO" id="GO:0009318">
    <property type="term" value="C:exodeoxyribonuclease VII complex"/>
    <property type="evidence" value="ECO:0007669"/>
    <property type="project" value="InterPro"/>
</dbReference>
<dbReference type="GO" id="GO:0008855">
    <property type="term" value="F:exodeoxyribonuclease VII activity"/>
    <property type="evidence" value="ECO:0007669"/>
    <property type="project" value="UniProtKB-UniRule"/>
</dbReference>
<dbReference type="GO" id="GO:0003676">
    <property type="term" value="F:nucleic acid binding"/>
    <property type="evidence" value="ECO:0007669"/>
    <property type="project" value="InterPro"/>
</dbReference>
<dbReference type="GO" id="GO:0006308">
    <property type="term" value="P:DNA catabolic process"/>
    <property type="evidence" value="ECO:0007669"/>
    <property type="project" value="UniProtKB-UniRule"/>
</dbReference>
<dbReference type="CDD" id="cd04489">
    <property type="entry name" value="ExoVII_LU_OBF"/>
    <property type="match status" value="1"/>
</dbReference>
<dbReference type="HAMAP" id="MF_00378">
    <property type="entry name" value="Exonuc_7_L"/>
    <property type="match status" value="1"/>
</dbReference>
<dbReference type="InterPro" id="IPR003753">
    <property type="entry name" value="Exonuc_VII_L"/>
</dbReference>
<dbReference type="InterPro" id="IPR020579">
    <property type="entry name" value="Exonuc_VII_lsu_C"/>
</dbReference>
<dbReference type="InterPro" id="IPR025824">
    <property type="entry name" value="OB-fold_nuc-bd_dom"/>
</dbReference>
<dbReference type="NCBIfam" id="TIGR00237">
    <property type="entry name" value="xseA"/>
    <property type="match status" value="1"/>
</dbReference>
<dbReference type="PANTHER" id="PTHR30008">
    <property type="entry name" value="EXODEOXYRIBONUCLEASE 7 LARGE SUBUNIT"/>
    <property type="match status" value="1"/>
</dbReference>
<dbReference type="PANTHER" id="PTHR30008:SF0">
    <property type="entry name" value="EXODEOXYRIBONUCLEASE 7 LARGE SUBUNIT"/>
    <property type="match status" value="1"/>
</dbReference>
<dbReference type="Pfam" id="PF02601">
    <property type="entry name" value="Exonuc_VII_L"/>
    <property type="match status" value="1"/>
</dbReference>
<dbReference type="Pfam" id="PF13742">
    <property type="entry name" value="tRNA_anti_2"/>
    <property type="match status" value="1"/>
</dbReference>
<reference key="1">
    <citation type="journal article" date="2009" name="Genome Res.">
        <title>Newly introduced genomic prophage islands are critical determinants of in vivo competitiveness in the Liverpool epidemic strain of Pseudomonas aeruginosa.</title>
        <authorList>
            <person name="Winstanley C."/>
            <person name="Langille M.G.I."/>
            <person name="Fothergill J.L."/>
            <person name="Kukavica-Ibrulj I."/>
            <person name="Paradis-Bleau C."/>
            <person name="Sanschagrin F."/>
            <person name="Thomson N.R."/>
            <person name="Winsor G.L."/>
            <person name="Quail M.A."/>
            <person name="Lennard N."/>
            <person name="Bignell A."/>
            <person name="Clarke L."/>
            <person name="Seeger K."/>
            <person name="Saunders D."/>
            <person name="Harris D."/>
            <person name="Parkhill J."/>
            <person name="Hancock R.E.W."/>
            <person name="Brinkman F.S.L."/>
            <person name="Levesque R.C."/>
        </authorList>
    </citation>
    <scope>NUCLEOTIDE SEQUENCE [LARGE SCALE GENOMIC DNA]</scope>
    <source>
        <strain>LESB58</strain>
    </source>
</reference>
<keyword id="KW-0963">Cytoplasm</keyword>
<keyword id="KW-0269">Exonuclease</keyword>
<keyword id="KW-0378">Hydrolase</keyword>
<keyword id="KW-0540">Nuclease</keyword>
<accession>B7UXJ1</accession>
<evidence type="ECO:0000255" key="1">
    <source>
        <dbReference type="HAMAP-Rule" id="MF_00378"/>
    </source>
</evidence>
<organism>
    <name type="scientific">Pseudomonas aeruginosa (strain LESB58)</name>
    <dbReference type="NCBI Taxonomy" id="557722"/>
    <lineage>
        <taxon>Bacteria</taxon>
        <taxon>Pseudomonadati</taxon>
        <taxon>Pseudomonadota</taxon>
        <taxon>Gammaproteobacteria</taxon>
        <taxon>Pseudomonadales</taxon>
        <taxon>Pseudomonadaceae</taxon>
        <taxon>Pseudomonas</taxon>
    </lineage>
</organism>
<sequence>MRNDPFQRLGLDREVLTVSQLNQRARLLLEDVFPQVWVEGELSNLARPASGHVYFTLKDSNAQIRCALFRQNALRVRQALRDGLAVKVRGKISLFEGRGDYQLIADTVEPAGDGALRLAFEALKEKLAGEGLFASERKRLLPAHPRRIGIVSSPSGAVIRDIISVFRRRAPQVELTLVPTAVQGREAVAQIVRALQLADRQGFDALILARGGGSLEDLWCFNEEAVARAVAACATPIVSAVGHETDVSISDFVADVRAPTPSAAAELLAPNAGDLQQRLDGLRRRLVLRMRDQLLRERLRLEGVARRLRHPGERLRQQAQRLDDLDMRLRRAFERQLAVRHERLVRLETRLAAQHPGRTLALLRQKLDSLAARLPRAAREVLKDRRQRLEGLAQTLNVVSPLATLGRGYSILLDERGRAIRDAGQTQPGQRLKARLAEGELEVRVEDNHRTPVTLSLLD</sequence>
<gene>
    <name evidence="1" type="primary">xseA</name>
    <name type="ordered locus">PLES_11971</name>
</gene>
<feature type="chain" id="PRO_1000122077" description="Exodeoxyribonuclease 7 large subunit">
    <location>
        <begin position="1"/>
        <end position="459"/>
    </location>
</feature>